<sequence>MSRSTNKLAVPGAESALDQMKYEIAQEFGVQLGADATARANGSVGGEITKRLVSLAEQQLGGYQK</sequence>
<comment type="function">
    <text>SASP are bound to spore DNA. They are double-stranded DNA-binding proteins that cause DNA to change to an a-like conformation. They protect the DNA backbone from chemical and enzymatic cleavage and are thus involved in dormant spore's high resistance to UV light.</text>
</comment>
<comment type="miscellaneous">
    <text>SASP are degraded in the first minutes of spore germination and provide amino acids for both new protein synthesis and metabolism.</text>
</comment>
<comment type="similarity">
    <text evidence="1">Belongs to the alpha/beta-type SASP family.</text>
</comment>
<dbReference type="EMBL" id="M13060">
    <property type="protein sequence ID" value="AAA22739.1"/>
    <property type="molecule type" value="Genomic_DNA"/>
</dbReference>
<dbReference type="PIR" id="B25234">
    <property type="entry name" value="B25234"/>
</dbReference>
<dbReference type="RefSeq" id="WP_000091640.1">
    <property type="nucleotide sequence ID" value="NZ_WBPP01000008.1"/>
</dbReference>
<dbReference type="SMR" id="P0A4F5"/>
<dbReference type="eggNOG" id="ENOG5032YR8">
    <property type="taxonomic scope" value="Bacteria"/>
</dbReference>
<dbReference type="OMA" id="GGQMTKR"/>
<dbReference type="GO" id="GO:0003690">
    <property type="term" value="F:double-stranded DNA binding"/>
    <property type="evidence" value="ECO:0007669"/>
    <property type="project" value="InterPro"/>
</dbReference>
<dbReference type="GO" id="GO:0006265">
    <property type="term" value="P:DNA topological change"/>
    <property type="evidence" value="ECO:0007669"/>
    <property type="project" value="InterPro"/>
</dbReference>
<dbReference type="GO" id="GO:0030435">
    <property type="term" value="P:sporulation resulting in formation of a cellular spore"/>
    <property type="evidence" value="ECO:0007669"/>
    <property type="project" value="UniProtKB-KW"/>
</dbReference>
<dbReference type="Gene3D" id="6.10.10.80">
    <property type="entry name" value="Small, acid-soluble spore protein, alpha/beta type-like"/>
    <property type="match status" value="1"/>
</dbReference>
<dbReference type="InterPro" id="IPR001448">
    <property type="entry name" value="SASP_alpha/beta-type"/>
</dbReference>
<dbReference type="InterPro" id="IPR018126">
    <property type="entry name" value="SASP_alpha/beta-type_CS"/>
</dbReference>
<dbReference type="InterPro" id="IPR050847">
    <property type="entry name" value="SASP_DNA-binding"/>
</dbReference>
<dbReference type="InterPro" id="IPR038300">
    <property type="entry name" value="SASP_sf_alpha/beta"/>
</dbReference>
<dbReference type="PANTHER" id="PTHR36107">
    <property type="entry name" value="SMALL, ACID-SOLUBLE SPORE PROTEIN A"/>
    <property type="match status" value="1"/>
</dbReference>
<dbReference type="PANTHER" id="PTHR36107:SF1">
    <property type="entry name" value="SMALL, ACID-SOLUBLE SPORE PROTEIN A"/>
    <property type="match status" value="1"/>
</dbReference>
<dbReference type="Pfam" id="PF00269">
    <property type="entry name" value="SASP"/>
    <property type="match status" value="1"/>
</dbReference>
<dbReference type="PROSITE" id="PS00304">
    <property type="entry name" value="SASP_1"/>
    <property type="match status" value="1"/>
</dbReference>
<dbReference type="PROSITE" id="PS00684">
    <property type="entry name" value="SASP_2"/>
    <property type="match status" value="1"/>
</dbReference>
<evidence type="ECO:0000305" key="1"/>
<protein>
    <recommendedName>
        <fullName>Small, acid-soluble spore protein 2</fullName>
        <shortName>SASP</shortName>
    </recommendedName>
</protein>
<accession>P0A4F5</accession>
<accession>P06554</accession>
<gene>
    <name type="primary">sasP-2</name>
</gene>
<name>SAS2_BACCE</name>
<organism>
    <name type="scientific">Bacillus cereus</name>
    <dbReference type="NCBI Taxonomy" id="1396"/>
    <lineage>
        <taxon>Bacteria</taxon>
        <taxon>Bacillati</taxon>
        <taxon>Bacillota</taxon>
        <taxon>Bacilli</taxon>
        <taxon>Bacillales</taxon>
        <taxon>Bacillaceae</taxon>
        <taxon>Bacillus</taxon>
        <taxon>Bacillus cereus group</taxon>
    </lineage>
</organism>
<reference key="1">
    <citation type="journal article" date="1986" name="J. Bacteriol.">
        <title>Cloning and nucleotide sequencing of genes for small, acid-soluble spore proteins of Bacillus cereus, Bacillus stearothermophilus, and 'Thermoactinomyces thalpophilus'.</title>
        <authorList>
            <person name="Loshon C.A."/>
            <person name="Fliss E.R."/>
            <person name="Setlow B."/>
            <person name="Foerster H.F."/>
            <person name="Setlow P."/>
        </authorList>
    </citation>
    <scope>NUCLEOTIDE SEQUENCE [GENOMIC DNA]</scope>
</reference>
<keyword id="KW-0238">DNA-binding</keyword>
<keyword id="KW-0749">Sporulation</keyword>
<proteinExistence type="inferred from homology"/>
<feature type="chain" id="PRO_0000196290" description="Small, acid-soluble spore protein 2">
    <location>
        <begin position="1"/>
        <end position="65"/>
    </location>
</feature>
<feature type="site" description="Cleavage; by spore protease">
    <location>
        <begin position="23"/>
        <end position="24"/>
    </location>
</feature>